<feature type="chain" id="PRO_0000433871" description="Acyl-CoA desaturase 3">
    <location>
        <begin position="1"/>
        <end position="359"/>
    </location>
</feature>
<feature type="topological domain" description="Cytoplasmic" evidence="1">
    <location>
        <begin position="1"/>
        <end position="72"/>
    </location>
</feature>
<feature type="transmembrane region" description="Helical" evidence="1">
    <location>
        <begin position="73"/>
        <end position="93"/>
    </location>
</feature>
<feature type="topological domain" description="Lumenal" evidence="1">
    <location>
        <begin position="94"/>
        <end position="97"/>
    </location>
</feature>
<feature type="transmembrane region" description="Helical" evidence="1">
    <location>
        <begin position="98"/>
        <end position="118"/>
    </location>
</feature>
<feature type="topological domain" description="Cytoplasmic" evidence="1">
    <location>
        <begin position="119"/>
        <end position="217"/>
    </location>
</feature>
<feature type="transmembrane region" description="Helical" evidence="1">
    <location>
        <begin position="218"/>
        <end position="237"/>
    </location>
</feature>
<feature type="topological domain" description="Lumenal" evidence="1">
    <location>
        <begin position="238"/>
        <end position="241"/>
    </location>
</feature>
<feature type="transmembrane region" description="Helical" evidence="1">
    <location>
        <begin position="242"/>
        <end position="263"/>
    </location>
</feature>
<feature type="topological domain" description="Cytoplasmic" evidence="1">
    <location>
        <begin position="264"/>
        <end position="359"/>
    </location>
</feature>
<feature type="region of interest" description="Disordered" evidence="4">
    <location>
        <begin position="1"/>
        <end position="34"/>
    </location>
</feature>
<feature type="short sequence motif" description="Histidine box-1" evidence="10">
    <location>
        <begin position="120"/>
        <end position="125"/>
    </location>
</feature>
<feature type="short sequence motif" description="Histidine box-2" evidence="10">
    <location>
        <begin position="157"/>
        <end position="161"/>
    </location>
</feature>
<feature type="short sequence motif" description="Histidine box-3" evidence="10">
    <location>
        <begin position="298"/>
        <end position="302"/>
    </location>
</feature>
<feature type="compositionally biased region" description="Low complexity" evidence="4">
    <location>
        <begin position="11"/>
        <end position="27"/>
    </location>
</feature>
<feature type="binding site" evidence="1">
    <location>
        <position position="75"/>
    </location>
    <ligand>
        <name>substrate</name>
    </ligand>
</feature>
<feature type="binding site" evidence="2">
    <location>
        <position position="120"/>
    </location>
    <ligand>
        <name>Fe cation</name>
        <dbReference type="ChEBI" id="CHEBI:24875"/>
        <label>1</label>
    </ligand>
</feature>
<feature type="binding site" evidence="2">
    <location>
        <position position="125"/>
    </location>
    <ligand>
        <name>Fe cation</name>
        <dbReference type="ChEBI" id="CHEBI:24875"/>
        <label>1</label>
    </ligand>
</feature>
<feature type="binding site" evidence="1">
    <location>
        <position position="148"/>
    </location>
    <ligand>
        <name>substrate</name>
    </ligand>
</feature>
<feature type="binding site" evidence="1">
    <location>
        <position position="155"/>
    </location>
    <ligand>
        <name>substrate</name>
    </ligand>
</feature>
<feature type="binding site" evidence="1">
    <location>
        <position position="156"/>
    </location>
    <ligand>
        <name>substrate</name>
    </ligand>
</feature>
<feature type="binding site" evidence="2">
    <location>
        <position position="157"/>
    </location>
    <ligand>
        <name>Fe cation</name>
        <dbReference type="ChEBI" id="CHEBI:24875"/>
        <label>1</label>
    </ligand>
</feature>
<feature type="binding site" evidence="2">
    <location>
        <position position="160"/>
    </location>
    <ligand>
        <name>Fe cation</name>
        <dbReference type="ChEBI" id="CHEBI:24875"/>
        <label>2</label>
    </ligand>
</feature>
<feature type="binding site" evidence="2">
    <location>
        <position position="161"/>
    </location>
    <ligand>
        <name>Fe cation</name>
        <dbReference type="ChEBI" id="CHEBI:24875"/>
        <label>1</label>
    </ligand>
</feature>
<feature type="binding site" evidence="1">
    <location>
        <position position="188"/>
    </location>
    <ligand>
        <name>substrate</name>
    </ligand>
</feature>
<feature type="binding site" evidence="1">
    <location>
        <position position="189"/>
    </location>
    <ligand>
        <name>substrate</name>
    </ligand>
</feature>
<feature type="binding site" evidence="1">
    <location>
        <position position="262"/>
    </location>
    <ligand>
        <name>substrate</name>
    </ligand>
</feature>
<feature type="binding site" evidence="2">
    <location>
        <position position="269"/>
    </location>
    <ligand>
        <name>Fe cation</name>
        <dbReference type="ChEBI" id="CHEBI:24875"/>
        <label>2</label>
    </ligand>
</feature>
<feature type="binding site" evidence="2">
    <location>
        <position position="298"/>
    </location>
    <ligand>
        <name>Fe cation</name>
        <dbReference type="ChEBI" id="CHEBI:24875"/>
        <label>2</label>
    </ligand>
</feature>
<feature type="binding site" evidence="2">
    <location>
        <position position="301"/>
    </location>
    <ligand>
        <name>Fe cation</name>
        <dbReference type="ChEBI" id="CHEBI:24875"/>
        <label>1</label>
    </ligand>
</feature>
<feature type="binding site" evidence="2">
    <location>
        <position position="302"/>
    </location>
    <ligand>
        <name>Fe cation</name>
        <dbReference type="ChEBI" id="CHEBI:24875"/>
        <label>2</label>
    </ligand>
</feature>
<feature type="modified residue" description="Phosphoserine" evidence="1">
    <location>
        <position position="203"/>
    </location>
</feature>
<feature type="splice variant" id="VSP_057848" description="In isoform 2.">
    <location>
        <begin position="1"/>
        <end position="224"/>
    </location>
</feature>
<feature type="mutagenesis site" description="Changes substrate specificity so that stearate becomes a good substrate.">
    <original>IE</original>
    <variation>AL</variation>
    <location>
        <begin position="112"/>
        <end position="113"/>
    </location>
</feature>
<feature type="sequence conflict" description="In Ref. 2; BAE22909." evidence="10" ref="2">
    <original>S</original>
    <variation>G</variation>
    <location>
        <position position="124"/>
    </location>
</feature>
<organism>
    <name type="scientific">Mus musculus</name>
    <name type="common">Mouse</name>
    <dbReference type="NCBI Taxonomy" id="10090"/>
    <lineage>
        <taxon>Eukaryota</taxon>
        <taxon>Metazoa</taxon>
        <taxon>Chordata</taxon>
        <taxon>Craniata</taxon>
        <taxon>Vertebrata</taxon>
        <taxon>Euteleostomi</taxon>
        <taxon>Mammalia</taxon>
        <taxon>Eutheria</taxon>
        <taxon>Euarchontoglires</taxon>
        <taxon>Glires</taxon>
        <taxon>Rodentia</taxon>
        <taxon>Myomorpha</taxon>
        <taxon>Muroidea</taxon>
        <taxon>Muridae</taxon>
        <taxon>Murinae</taxon>
        <taxon>Mus</taxon>
        <taxon>Mus</taxon>
    </lineage>
</organism>
<keyword id="KW-0025">Alternative splicing</keyword>
<keyword id="KW-0256">Endoplasmic reticulum</keyword>
<keyword id="KW-0275">Fatty acid biosynthesis</keyword>
<keyword id="KW-0276">Fatty acid metabolism</keyword>
<keyword id="KW-0408">Iron</keyword>
<keyword id="KW-0444">Lipid biosynthesis</keyword>
<keyword id="KW-0443">Lipid metabolism</keyword>
<keyword id="KW-0472">Membrane</keyword>
<keyword id="KW-0479">Metal-binding</keyword>
<keyword id="KW-0492">Microsome</keyword>
<keyword id="KW-0560">Oxidoreductase</keyword>
<keyword id="KW-0597">Phosphoprotein</keyword>
<keyword id="KW-1185">Reference proteome</keyword>
<keyword id="KW-0812">Transmembrane</keyword>
<keyword id="KW-1133">Transmembrane helix</keyword>
<evidence type="ECO:0000250" key="1">
    <source>
        <dbReference type="UniProtKB" id="O00767"/>
    </source>
</evidence>
<evidence type="ECO:0000250" key="2">
    <source>
        <dbReference type="UniProtKB" id="P13516"/>
    </source>
</evidence>
<evidence type="ECO:0000255" key="3">
    <source>
        <dbReference type="RuleBase" id="RU000581"/>
    </source>
</evidence>
<evidence type="ECO:0000256" key="4">
    <source>
        <dbReference type="SAM" id="MobiDB-lite"/>
    </source>
</evidence>
<evidence type="ECO:0000269" key="5">
    <source>
    </source>
</evidence>
<evidence type="ECO:0000269" key="6">
    <source>
    </source>
</evidence>
<evidence type="ECO:0000269" key="7">
    <source>
    </source>
</evidence>
<evidence type="ECO:0000303" key="8">
    <source>
    </source>
</evidence>
<evidence type="ECO:0000303" key="9">
    <source>
    </source>
</evidence>
<evidence type="ECO:0000305" key="10"/>
<evidence type="ECO:0000312" key="11">
    <source>
        <dbReference type="EMBL" id="AAK13256.1"/>
    </source>
</evidence>
<evidence type="ECO:0000312" key="12">
    <source>
        <dbReference type="EMBL" id="BAE22909.1"/>
    </source>
</evidence>
<evidence type="ECO:0000312" key="13">
    <source>
        <dbReference type="EMBL" id="EDL01300.1"/>
    </source>
</evidence>
<evidence type="ECO:0000312" key="14">
    <source>
        <dbReference type="MGI" id="MGI:1353437"/>
    </source>
</evidence>
<evidence type="ECO:0000312" key="15">
    <source>
        <dbReference type="Proteomes" id="UP000000589"/>
    </source>
</evidence>
<reference evidence="11" key="1">
    <citation type="journal article" date="2001" name="Genomics">
        <title>Scd3--a novel gene of the stearoyl-CoA desaturase family with restricted expression in skin.</title>
        <authorList>
            <person name="Zheng Y."/>
            <person name="Prouty S.M."/>
            <person name="Harmon A."/>
            <person name="Sundberg J.P."/>
            <person name="Stenn K.S."/>
            <person name="Parimoo S."/>
        </authorList>
    </citation>
    <scope>NUCLEOTIDE SEQUENCE [MRNA] (ISOFORM 1)</scope>
    <scope>TISSUE SPECIFICITY</scope>
    <scope>DEVELOPMENTAL STAGE</scope>
</reference>
<reference key="2">
    <citation type="journal article" date="2005" name="Science">
        <title>The transcriptional landscape of the mammalian genome.</title>
        <authorList>
            <person name="Carninci P."/>
            <person name="Kasukawa T."/>
            <person name="Katayama S."/>
            <person name="Gough J."/>
            <person name="Frith M.C."/>
            <person name="Maeda N."/>
            <person name="Oyama R."/>
            <person name="Ravasi T."/>
            <person name="Lenhard B."/>
            <person name="Wells C."/>
            <person name="Kodzius R."/>
            <person name="Shimokawa K."/>
            <person name="Bajic V.B."/>
            <person name="Brenner S.E."/>
            <person name="Batalov S."/>
            <person name="Forrest A.R."/>
            <person name="Zavolan M."/>
            <person name="Davis M.J."/>
            <person name="Wilming L.G."/>
            <person name="Aidinis V."/>
            <person name="Allen J.E."/>
            <person name="Ambesi-Impiombato A."/>
            <person name="Apweiler R."/>
            <person name="Aturaliya R.N."/>
            <person name="Bailey T.L."/>
            <person name="Bansal M."/>
            <person name="Baxter L."/>
            <person name="Beisel K.W."/>
            <person name="Bersano T."/>
            <person name="Bono H."/>
            <person name="Chalk A.M."/>
            <person name="Chiu K.P."/>
            <person name="Choudhary V."/>
            <person name="Christoffels A."/>
            <person name="Clutterbuck D.R."/>
            <person name="Crowe M.L."/>
            <person name="Dalla E."/>
            <person name="Dalrymple B.P."/>
            <person name="de Bono B."/>
            <person name="Della Gatta G."/>
            <person name="di Bernardo D."/>
            <person name="Down T."/>
            <person name="Engstrom P."/>
            <person name="Fagiolini M."/>
            <person name="Faulkner G."/>
            <person name="Fletcher C.F."/>
            <person name="Fukushima T."/>
            <person name="Furuno M."/>
            <person name="Futaki S."/>
            <person name="Gariboldi M."/>
            <person name="Georgii-Hemming P."/>
            <person name="Gingeras T.R."/>
            <person name="Gojobori T."/>
            <person name="Green R.E."/>
            <person name="Gustincich S."/>
            <person name="Harbers M."/>
            <person name="Hayashi Y."/>
            <person name="Hensch T.K."/>
            <person name="Hirokawa N."/>
            <person name="Hill D."/>
            <person name="Huminiecki L."/>
            <person name="Iacono M."/>
            <person name="Ikeo K."/>
            <person name="Iwama A."/>
            <person name="Ishikawa T."/>
            <person name="Jakt M."/>
            <person name="Kanapin A."/>
            <person name="Katoh M."/>
            <person name="Kawasawa Y."/>
            <person name="Kelso J."/>
            <person name="Kitamura H."/>
            <person name="Kitano H."/>
            <person name="Kollias G."/>
            <person name="Krishnan S.P."/>
            <person name="Kruger A."/>
            <person name="Kummerfeld S.K."/>
            <person name="Kurochkin I.V."/>
            <person name="Lareau L.F."/>
            <person name="Lazarevic D."/>
            <person name="Lipovich L."/>
            <person name="Liu J."/>
            <person name="Liuni S."/>
            <person name="McWilliam S."/>
            <person name="Madan Babu M."/>
            <person name="Madera M."/>
            <person name="Marchionni L."/>
            <person name="Matsuda H."/>
            <person name="Matsuzawa S."/>
            <person name="Miki H."/>
            <person name="Mignone F."/>
            <person name="Miyake S."/>
            <person name="Morris K."/>
            <person name="Mottagui-Tabar S."/>
            <person name="Mulder N."/>
            <person name="Nakano N."/>
            <person name="Nakauchi H."/>
            <person name="Ng P."/>
            <person name="Nilsson R."/>
            <person name="Nishiguchi S."/>
            <person name="Nishikawa S."/>
            <person name="Nori F."/>
            <person name="Ohara O."/>
            <person name="Okazaki Y."/>
            <person name="Orlando V."/>
            <person name="Pang K.C."/>
            <person name="Pavan W.J."/>
            <person name="Pavesi G."/>
            <person name="Pesole G."/>
            <person name="Petrovsky N."/>
            <person name="Piazza S."/>
            <person name="Reed J."/>
            <person name="Reid J.F."/>
            <person name="Ring B.Z."/>
            <person name="Ringwald M."/>
            <person name="Rost B."/>
            <person name="Ruan Y."/>
            <person name="Salzberg S.L."/>
            <person name="Sandelin A."/>
            <person name="Schneider C."/>
            <person name="Schoenbach C."/>
            <person name="Sekiguchi K."/>
            <person name="Semple C.A."/>
            <person name="Seno S."/>
            <person name="Sessa L."/>
            <person name="Sheng Y."/>
            <person name="Shibata Y."/>
            <person name="Shimada H."/>
            <person name="Shimada K."/>
            <person name="Silva D."/>
            <person name="Sinclair B."/>
            <person name="Sperling S."/>
            <person name="Stupka E."/>
            <person name="Sugiura K."/>
            <person name="Sultana R."/>
            <person name="Takenaka Y."/>
            <person name="Taki K."/>
            <person name="Tammoja K."/>
            <person name="Tan S.L."/>
            <person name="Tang S."/>
            <person name="Taylor M.S."/>
            <person name="Tegner J."/>
            <person name="Teichmann S.A."/>
            <person name="Ueda H.R."/>
            <person name="van Nimwegen E."/>
            <person name="Verardo R."/>
            <person name="Wei C.L."/>
            <person name="Yagi K."/>
            <person name="Yamanishi H."/>
            <person name="Zabarovsky E."/>
            <person name="Zhu S."/>
            <person name="Zimmer A."/>
            <person name="Hide W."/>
            <person name="Bult C."/>
            <person name="Grimmond S.M."/>
            <person name="Teasdale R.D."/>
            <person name="Liu E.T."/>
            <person name="Brusic V."/>
            <person name="Quackenbush J."/>
            <person name="Wahlestedt C."/>
            <person name="Mattick J.S."/>
            <person name="Hume D.A."/>
            <person name="Kai C."/>
            <person name="Sasaki D."/>
            <person name="Tomaru Y."/>
            <person name="Fukuda S."/>
            <person name="Kanamori-Katayama M."/>
            <person name="Suzuki M."/>
            <person name="Aoki J."/>
            <person name="Arakawa T."/>
            <person name="Iida J."/>
            <person name="Imamura K."/>
            <person name="Itoh M."/>
            <person name="Kato T."/>
            <person name="Kawaji H."/>
            <person name="Kawagashira N."/>
            <person name="Kawashima T."/>
            <person name="Kojima M."/>
            <person name="Kondo S."/>
            <person name="Konno H."/>
            <person name="Nakano K."/>
            <person name="Ninomiya N."/>
            <person name="Nishio T."/>
            <person name="Okada M."/>
            <person name="Plessy C."/>
            <person name="Shibata K."/>
            <person name="Shiraki T."/>
            <person name="Suzuki S."/>
            <person name="Tagami M."/>
            <person name="Waki K."/>
            <person name="Watahiki A."/>
            <person name="Okamura-Oho Y."/>
            <person name="Suzuki H."/>
            <person name="Kawai J."/>
            <person name="Hayashizaki Y."/>
        </authorList>
    </citation>
    <scope>NUCLEOTIDE SEQUENCE [LARGE SCALE MRNA] (ISOFORMS 1 AND 2)</scope>
    <source>
        <strain evidence="12">C57BL/6J</strain>
        <tissue evidence="12">Eye</tissue>
    </source>
</reference>
<reference evidence="15" key="3">
    <citation type="journal article" date="2009" name="PLoS Biol.">
        <title>Lineage-specific biology revealed by a finished genome assembly of the mouse.</title>
        <authorList>
            <person name="Church D.M."/>
            <person name="Goodstadt L."/>
            <person name="Hillier L.W."/>
            <person name="Zody M.C."/>
            <person name="Goldstein S."/>
            <person name="She X."/>
            <person name="Bult C.J."/>
            <person name="Agarwala R."/>
            <person name="Cherry J.L."/>
            <person name="DiCuccio M."/>
            <person name="Hlavina W."/>
            <person name="Kapustin Y."/>
            <person name="Meric P."/>
            <person name="Maglott D."/>
            <person name="Birtle Z."/>
            <person name="Marques A.C."/>
            <person name="Graves T."/>
            <person name="Zhou S."/>
            <person name="Teague B."/>
            <person name="Potamousis K."/>
            <person name="Churas C."/>
            <person name="Place M."/>
            <person name="Herschleb J."/>
            <person name="Runnheim R."/>
            <person name="Forrest D."/>
            <person name="Amos-Landgraf J."/>
            <person name="Schwartz D.C."/>
            <person name="Cheng Z."/>
            <person name="Lindblad-Toh K."/>
            <person name="Eichler E.E."/>
            <person name="Ponting C.P."/>
        </authorList>
    </citation>
    <scope>NUCLEOTIDE SEQUENCE [LARGE SCALE GENOMIC DNA]</scope>
    <source>
        <strain evidence="15">C57BL/6J</strain>
    </source>
</reference>
<reference evidence="13" key="4">
    <citation type="submission" date="2005-07" db="EMBL/GenBank/DDBJ databases">
        <authorList>
            <person name="Mural R.J."/>
            <person name="Adams M.D."/>
            <person name="Myers E.W."/>
            <person name="Smith H.O."/>
            <person name="Venter J.C."/>
        </authorList>
    </citation>
    <scope>NUCLEOTIDE SEQUENCE [LARGE SCALE GENOMIC DNA]</scope>
</reference>
<reference key="5">
    <citation type="journal article" date="2004" name="Genome Res.">
        <title>The status, quality, and expansion of the NIH full-length cDNA project: the Mammalian Gene Collection (MGC).</title>
        <authorList>
            <consortium name="The MGC Project Team"/>
        </authorList>
    </citation>
    <scope>NUCLEOTIDE SEQUENCE [LARGE SCALE MRNA] (ISOFORM 1)</scope>
</reference>
<reference key="6">
    <citation type="journal article" date="2005" name="Proc. Natl. Acad. Sci. U.S.A.">
        <title>Stearoyl-CoA desaturase-2 gene expression is required for lipid synthesis during early skin and liver development.</title>
        <authorList>
            <person name="Miyazaki M."/>
            <person name="Dobrzyn A."/>
            <person name="Elias P.M."/>
            <person name="Ntambi J.M."/>
        </authorList>
    </citation>
    <scope>TISSUE SPECIFICITY</scope>
</reference>
<reference key="7">
    <citation type="journal article" date="2006" name="J. Lipid Res.">
        <title>Identification of mouse palmitoyl-coenzyme A Delta9-desaturase.</title>
        <authorList>
            <person name="Miyazaki M."/>
            <person name="Bruggink S.M."/>
            <person name="Ntambi J.M."/>
        </authorList>
    </citation>
    <scope>FUNCTION</scope>
    <scope>CATALYTIC ACTIVITY</scope>
    <scope>SUBCELLULAR LOCATION</scope>
</reference>
<reference key="8">
    <citation type="journal article" date="2015" name="Nature">
        <title>X-ray structure of a mammalian stearoyl-CoA desaturase.</title>
        <authorList>
            <person name="Bai Y."/>
            <person name="McCoy J.G."/>
            <person name="Levin E.J."/>
            <person name="Sobrado P."/>
            <person name="Rajashankar K.R."/>
            <person name="Fox B.G."/>
            <person name="Zhou M."/>
        </authorList>
    </citation>
    <scope>FUNCTION</scope>
    <scope>CATALYTIC ACTIVITY</scope>
    <scope>MUTAGENESIS OF 112-ILE-GLU-113</scope>
</reference>
<comment type="function">
    <text evidence="1 6 7">Stearoyl-CoA desaturase that utilizes O(2) and electrons from reduced cytochrome b5 to introduce the first double bond into saturated fatty acyl-CoA substrates. Catalyzes the insertion of a cis double bond at the delta-9 position into fatty acyl-CoA substrates including palmitoyl-CoA (PubMed:16443825, PubMed:26098370). Has a strong preference for saturated fatty acids with chain lengths of 14 or 16 carbon atoms (C14:0 and C16:0), and has only very low activity with stearatate (C18:0) (PubMed:16443825, PubMed:26098370). Required for the biosynthesis of membrane phospholipids, cholesterol esters and triglycerides (By similarity).</text>
</comment>
<comment type="catalytic activity">
    <reaction evidence="6 7">
        <text>hexadecanoyl-CoA + 2 Fe(II)-[cytochrome b5] + O2 + 2 H(+) = (9Z)-hexadecenoyl-CoA + 2 Fe(III)-[cytochrome b5] + 2 H2O</text>
        <dbReference type="Rhea" id="RHEA:36931"/>
        <dbReference type="Rhea" id="RHEA-COMP:10438"/>
        <dbReference type="Rhea" id="RHEA-COMP:10439"/>
        <dbReference type="ChEBI" id="CHEBI:15377"/>
        <dbReference type="ChEBI" id="CHEBI:15378"/>
        <dbReference type="ChEBI" id="CHEBI:15379"/>
        <dbReference type="ChEBI" id="CHEBI:29033"/>
        <dbReference type="ChEBI" id="CHEBI:29034"/>
        <dbReference type="ChEBI" id="CHEBI:57379"/>
        <dbReference type="ChEBI" id="CHEBI:61540"/>
    </reaction>
</comment>
<comment type="cofactor">
    <cofactor evidence="1">
        <name>Fe(2+)</name>
        <dbReference type="ChEBI" id="CHEBI:29033"/>
    </cofactor>
    <text evidence="1">Expected to bind 2 Fe(2+) ions per subunit.</text>
</comment>
<comment type="subcellular location">
    <subcellularLocation>
        <location evidence="1">Endoplasmic reticulum membrane</location>
        <topology evidence="1">Multi-pass membrane protein</topology>
    </subcellularLocation>
    <subcellularLocation>
        <location evidence="6">Microsome membrane</location>
    </subcellularLocation>
</comment>
<comment type="alternative products">
    <event type="alternative splicing"/>
    <isoform>
        <id>Q99PL7-1</id>
        <name>1</name>
        <sequence type="displayed"/>
    </isoform>
    <isoform>
        <id>Q99PL7-2</id>
        <name>2</name>
        <sequence type="described" ref="VSP_057848"/>
    </isoform>
</comment>
<comment type="tissue specificity">
    <text evidence="5">Detected in skin, but at lower levels compared to Scd1. Detected in the middlle part of the sebaceous gland, but not in hair follicle. Not detected in liver and brain.</text>
</comment>
<comment type="developmental stage">
    <text evidence="5">Expression is increased during the first eight days (anagen) of the hair cycle in male mice, and is low during the quiescent phase (telogen) of the hair cycle. Expression is very low throughout the hair cycle in female mice.</text>
</comment>
<comment type="domain">
    <text evidence="1">The histidine box domains are involved in binding the catalytic metal ions.</text>
</comment>
<comment type="similarity">
    <text evidence="3">Belongs to the fatty acid desaturase type 1 family.</text>
</comment>
<dbReference type="EC" id="1.14.19.-" evidence="6 7"/>
<dbReference type="EMBL" id="AF272037">
    <property type="protein sequence ID" value="AAK13256.1"/>
    <property type="molecule type" value="mRNA"/>
</dbReference>
<dbReference type="EMBL" id="AK015784">
    <property type="protein sequence ID" value="BAB29975.1"/>
    <property type="molecule type" value="mRNA"/>
</dbReference>
<dbReference type="EMBL" id="AK136277">
    <property type="protein sequence ID" value="BAE22909.1"/>
    <property type="molecule type" value="mRNA"/>
</dbReference>
<dbReference type="EMBL" id="AC123853">
    <property type="status" value="NOT_ANNOTATED_CDS"/>
    <property type="molecule type" value="Genomic_DNA"/>
</dbReference>
<dbReference type="EMBL" id="AC125101">
    <property type="status" value="NOT_ANNOTATED_CDS"/>
    <property type="molecule type" value="Genomic_DNA"/>
</dbReference>
<dbReference type="EMBL" id="CH468367">
    <property type="protein sequence ID" value="EDL01300.1"/>
    <property type="molecule type" value="Genomic_DNA"/>
</dbReference>
<dbReference type="EMBL" id="BC118033">
    <property type="protein sequence ID" value="AAI18034.1"/>
    <property type="molecule type" value="mRNA"/>
</dbReference>
<dbReference type="EMBL" id="BC118045">
    <property type="protein sequence ID" value="AAI18046.1"/>
    <property type="molecule type" value="mRNA"/>
</dbReference>
<dbReference type="CCDS" id="CCDS29847.1">
    <molecule id="Q99PL7-1"/>
</dbReference>
<dbReference type="RefSeq" id="NP_077770.1">
    <molecule id="Q99PL7-1"/>
    <property type="nucleotide sequence ID" value="NM_024450.2"/>
</dbReference>
<dbReference type="SMR" id="Q99PL7"/>
<dbReference type="FunCoup" id="Q99PL7">
    <property type="interactions" value="652"/>
</dbReference>
<dbReference type="STRING" id="10090.ENSMUSP00000026220"/>
<dbReference type="iPTMnet" id="Q99PL7"/>
<dbReference type="PhosphoSitePlus" id="Q99PL7"/>
<dbReference type="SwissPalm" id="Q99PL7"/>
<dbReference type="jPOST" id="Q99PL7"/>
<dbReference type="PaxDb" id="10090-ENSMUSP00000026220"/>
<dbReference type="ProteomicsDB" id="255486">
    <molecule id="Q99PL7-1"/>
</dbReference>
<dbReference type="ProteomicsDB" id="255487">
    <molecule id="Q99PL7-2"/>
</dbReference>
<dbReference type="Pumba" id="Q99PL7"/>
<dbReference type="DNASU" id="30049"/>
<dbReference type="Ensembl" id="ENSMUST00000026220.7">
    <molecule id="Q99PL7-1"/>
    <property type="protein sequence ID" value="ENSMUSP00000026220.6"/>
    <property type="gene ID" value="ENSMUSG00000025202.9"/>
</dbReference>
<dbReference type="Ensembl" id="ENSMUST00000237324.2">
    <molecule id="Q99PL7-2"/>
    <property type="protein sequence ID" value="ENSMUSP00000157819.2"/>
    <property type="gene ID" value="ENSMUSG00000025202.9"/>
</dbReference>
<dbReference type="GeneID" id="30049"/>
<dbReference type="KEGG" id="mmu:30049"/>
<dbReference type="UCSC" id="uc008hpn.1">
    <molecule id="Q99PL7-1"/>
    <property type="organism name" value="mouse"/>
</dbReference>
<dbReference type="UCSC" id="uc008hpo.1">
    <property type="organism name" value="mouse"/>
</dbReference>
<dbReference type="AGR" id="MGI:1353437"/>
<dbReference type="CTD" id="30049"/>
<dbReference type="MGI" id="MGI:1353437">
    <property type="gene designation" value="Scd3"/>
</dbReference>
<dbReference type="VEuPathDB" id="HostDB:ENSMUSG00000025202"/>
<dbReference type="eggNOG" id="KOG1600">
    <property type="taxonomic scope" value="Eukaryota"/>
</dbReference>
<dbReference type="GeneTree" id="ENSGT00940000162971"/>
<dbReference type="HOGENOM" id="CLU_027359_0_0_1"/>
<dbReference type="InParanoid" id="Q99PL7"/>
<dbReference type="OMA" id="IREKCGR"/>
<dbReference type="OrthoDB" id="10260134at2759"/>
<dbReference type="PhylomeDB" id="Q99PL7"/>
<dbReference type="TreeFam" id="TF313251"/>
<dbReference type="BioGRID-ORCS" id="30049">
    <property type="hits" value="2 hits in 77 CRISPR screens"/>
</dbReference>
<dbReference type="PRO" id="PR:Q99PL7"/>
<dbReference type="Proteomes" id="UP000000589">
    <property type="component" value="Chromosome 19"/>
</dbReference>
<dbReference type="RNAct" id="Q99PL7">
    <property type="molecule type" value="protein"/>
</dbReference>
<dbReference type="Bgee" id="ENSMUSG00000025202">
    <property type="expression patterns" value="Expressed in animal zygote and 141 other cell types or tissues"/>
</dbReference>
<dbReference type="GO" id="GO:0005789">
    <property type="term" value="C:endoplasmic reticulum membrane"/>
    <property type="evidence" value="ECO:0007669"/>
    <property type="project" value="UniProtKB-SubCell"/>
</dbReference>
<dbReference type="GO" id="GO:0046872">
    <property type="term" value="F:metal ion binding"/>
    <property type="evidence" value="ECO:0007669"/>
    <property type="project" value="UniProtKB-KW"/>
</dbReference>
<dbReference type="GO" id="GO:0032896">
    <property type="term" value="F:palmitoyl-CoA 9-desaturase activity"/>
    <property type="evidence" value="ECO:0000314"/>
    <property type="project" value="MGI"/>
</dbReference>
<dbReference type="GO" id="GO:1903966">
    <property type="term" value="P:monounsaturated fatty acid biosynthetic process"/>
    <property type="evidence" value="ECO:0000314"/>
    <property type="project" value="MGI"/>
</dbReference>
<dbReference type="CDD" id="cd03505">
    <property type="entry name" value="Delta9-FADS-like"/>
    <property type="match status" value="1"/>
</dbReference>
<dbReference type="InterPro" id="IPR015876">
    <property type="entry name" value="Acyl-CoA_DS"/>
</dbReference>
<dbReference type="InterPro" id="IPR005804">
    <property type="entry name" value="FA_desaturase_dom"/>
</dbReference>
<dbReference type="InterPro" id="IPR001522">
    <property type="entry name" value="FADS-1_CS"/>
</dbReference>
<dbReference type="PANTHER" id="PTHR11351">
    <property type="entry name" value="ACYL-COA DESATURASE"/>
    <property type="match status" value="1"/>
</dbReference>
<dbReference type="PANTHER" id="PTHR11351:SF39">
    <property type="entry name" value="ACYL-COA DESATURASE 3"/>
    <property type="match status" value="1"/>
</dbReference>
<dbReference type="Pfam" id="PF00487">
    <property type="entry name" value="FA_desaturase"/>
    <property type="match status" value="1"/>
</dbReference>
<dbReference type="PRINTS" id="PR00075">
    <property type="entry name" value="FACDDSATRASE"/>
</dbReference>
<dbReference type="PROSITE" id="PS00476">
    <property type="entry name" value="FATTY_ACID_DESATUR_1"/>
    <property type="match status" value="1"/>
</dbReference>
<accession>Q99PL7</accession>
<accession>Q3UWK5</accession>
<accession>Q9D550</accession>
<name>SCD3_MOUSE</name>
<sequence length="359" mass="41432">MPGHLLQEEMTPSYTTTTTITAPPSGSLQNGREKVKTVPLYLEEDIRPEMKEDIYDPTYQDEEGPPPKLEYVWRNIILMALLHVGALYGITLVPSCKLYTCLFAFVYYVISIEGIGAGVHRLWSHRTYKARLPLRIFLIIANTMAFQNDVYEWARDHRAHHKFSETHADPHNSRRGFFFSHVGWLLVRKHPAVKEKGGKLDMSDLKAEKLVMFQRRYYKPGILLMCFILPTLVPWYCWGETFLNSFYVATLLRYAVVLNATWLVNSAAHLYGYRPYDKNIDPRQNALVSLGSMGEGFHNYHHAFPYDYSASEYRWHINFTTFFIDCMAALGLAYDRKRVSKATVLARIKRTGDGSHKSG</sequence>
<gene>
    <name evidence="14" type="primary">Scd3</name>
</gene>
<proteinExistence type="evidence at protein level"/>
<protein>
    <recommendedName>
        <fullName evidence="10">Acyl-CoA desaturase 3</fullName>
        <ecNumber evidence="6 7">1.14.19.-</ecNumber>
    </recommendedName>
    <alternativeName>
        <fullName evidence="9">Delta(9)-desaturase 3</fullName>
        <shortName evidence="9">Delta-9 desaturase 3</shortName>
    </alternativeName>
    <alternativeName>
        <fullName evidence="10">Fatty acid desaturase 3</fullName>
    </alternativeName>
    <alternativeName>
        <fullName evidence="9">Palmitoyl-CoA desaturase</fullName>
    </alternativeName>
    <alternativeName>
        <fullName evidence="8">Stearoyl-CoA desaturase 3</fullName>
    </alternativeName>
</protein>